<accession>B0SKW4</accession>
<organism>
    <name type="scientific">Leptospira biflexa serovar Patoc (strain Patoc 1 / ATCC 23582 / Paris)</name>
    <dbReference type="NCBI Taxonomy" id="456481"/>
    <lineage>
        <taxon>Bacteria</taxon>
        <taxon>Pseudomonadati</taxon>
        <taxon>Spirochaetota</taxon>
        <taxon>Spirochaetia</taxon>
        <taxon>Leptospirales</taxon>
        <taxon>Leptospiraceae</taxon>
        <taxon>Leptospira</taxon>
    </lineage>
</organism>
<protein>
    <recommendedName>
        <fullName evidence="1">Phosphoserine aminotransferase</fullName>
        <ecNumber evidence="1">2.6.1.52</ecNumber>
    </recommendedName>
    <alternativeName>
        <fullName evidence="1">Phosphohydroxythreonine aminotransferase</fullName>
        <shortName evidence="1">PSAT</shortName>
    </alternativeName>
</protein>
<gene>
    <name evidence="1" type="primary">serC</name>
    <name type="ordered locus">LEPBI_I2366</name>
</gene>
<feature type="chain" id="PRO_1000097217" description="Phosphoserine aminotransferase">
    <location>
        <begin position="1"/>
        <end position="365"/>
    </location>
</feature>
<feature type="binding site" evidence="1">
    <location>
        <position position="46"/>
    </location>
    <ligand>
        <name>L-glutamate</name>
        <dbReference type="ChEBI" id="CHEBI:29985"/>
    </ligand>
</feature>
<feature type="binding site" evidence="1">
    <location>
        <begin position="80"/>
        <end position="81"/>
    </location>
    <ligand>
        <name>pyridoxal 5'-phosphate</name>
        <dbReference type="ChEBI" id="CHEBI:597326"/>
    </ligand>
</feature>
<feature type="binding site" evidence="1">
    <location>
        <position position="106"/>
    </location>
    <ligand>
        <name>pyridoxal 5'-phosphate</name>
        <dbReference type="ChEBI" id="CHEBI:597326"/>
    </ligand>
</feature>
<feature type="binding site" evidence="1">
    <location>
        <position position="157"/>
    </location>
    <ligand>
        <name>pyridoxal 5'-phosphate</name>
        <dbReference type="ChEBI" id="CHEBI:597326"/>
    </ligand>
</feature>
<feature type="binding site" evidence="1">
    <location>
        <position position="177"/>
    </location>
    <ligand>
        <name>pyridoxal 5'-phosphate</name>
        <dbReference type="ChEBI" id="CHEBI:597326"/>
    </ligand>
</feature>
<feature type="binding site" evidence="1">
    <location>
        <position position="200"/>
    </location>
    <ligand>
        <name>pyridoxal 5'-phosphate</name>
        <dbReference type="ChEBI" id="CHEBI:597326"/>
    </ligand>
</feature>
<feature type="binding site" evidence="1">
    <location>
        <begin position="242"/>
        <end position="243"/>
    </location>
    <ligand>
        <name>pyridoxal 5'-phosphate</name>
        <dbReference type="ChEBI" id="CHEBI:597326"/>
    </ligand>
</feature>
<feature type="modified residue" description="N6-(pyridoxal phosphate)lysine" evidence="1">
    <location>
        <position position="201"/>
    </location>
</feature>
<comment type="function">
    <text evidence="1">Catalyzes the reversible conversion of 3-phosphohydroxypyruvate to phosphoserine and of 3-hydroxy-2-oxo-4-phosphonooxybutanoate to phosphohydroxythreonine.</text>
</comment>
<comment type="catalytic activity">
    <reaction evidence="1">
        <text>O-phospho-L-serine + 2-oxoglutarate = 3-phosphooxypyruvate + L-glutamate</text>
        <dbReference type="Rhea" id="RHEA:14329"/>
        <dbReference type="ChEBI" id="CHEBI:16810"/>
        <dbReference type="ChEBI" id="CHEBI:18110"/>
        <dbReference type="ChEBI" id="CHEBI:29985"/>
        <dbReference type="ChEBI" id="CHEBI:57524"/>
        <dbReference type="EC" id="2.6.1.52"/>
    </reaction>
</comment>
<comment type="catalytic activity">
    <reaction evidence="1">
        <text>4-(phosphooxy)-L-threonine + 2-oxoglutarate = (R)-3-hydroxy-2-oxo-4-phosphooxybutanoate + L-glutamate</text>
        <dbReference type="Rhea" id="RHEA:16573"/>
        <dbReference type="ChEBI" id="CHEBI:16810"/>
        <dbReference type="ChEBI" id="CHEBI:29985"/>
        <dbReference type="ChEBI" id="CHEBI:58452"/>
        <dbReference type="ChEBI" id="CHEBI:58538"/>
        <dbReference type="EC" id="2.6.1.52"/>
    </reaction>
</comment>
<comment type="cofactor">
    <cofactor evidence="1">
        <name>pyridoxal 5'-phosphate</name>
        <dbReference type="ChEBI" id="CHEBI:597326"/>
    </cofactor>
    <text evidence="1">Binds 1 pyridoxal phosphate per subunit.</text>
</comment>
<comment type="pathway">
    <text evidence="1">Amino-acid biosynthesis; L-serine biosynthesis; L-serine from 3-phospho-D-glycerate: step 2/3.</text>
</comment>
<comment type="pathway">
    <text evidence="1">Cofactor biosynthesis; pyridoxine 5'-phosphate biosynthesis; pyridoxine 5'-phosphate from D-erythrose 4-phosphate: step 3/5.</text>
</comment>
<comment type="subunit">
    <text evidence="1">Homodimer.</text>
</comment>
<comment type="subcellular location">
    <subcellularLocation>
        <location evidence="1">Cytoplasm</location>
    </subcellularLocation>
</comment>
<comment type="similarity">
    <text evidence="1">Belongs to the class-V pyridoxal-phosphate-dependent aminotransferase family. SerC subfamily.</text>
</comment>
<evidence type="ECO:0000255" key="1">
    <source>
        <dbReference type="HAMAP-Rule" id="MF_00160"/>
    </source>
</evidence>
<name>SERC_LEPBP</name>
<keyword id="KW-0028">Amino-acid biosynthesis</keyword>
<keyword id="KW-0032">Aminotransferase</keyword>
<keyword id="KW-0963">Cytoplasm</keyword>
<keyword id="KW-0663">Pyridoxal phosphate</keyword>
<keyword id="KW-0664">Pyridoxine biosynthesis</keyword>
<keyword id="KW-1185">Reference proteome</keyword>
<keyword id="KW-0718">Serine biosynthesis</keyword>
<keyword id="KW-0808">Transferase</keyword>
<dbReference type="EC" id="2.6.1.52" evidence="1"/>
<dbReference type="EMBL" id="CP000786">
    <property type="protein sequence ID" value="ABZ98457.1"/>
    <property type="molecule type" value="Genomic_DNA"/>
</dbReference>
<dbReference type="SMR" id="B0SKW4"/>
<dbReference type="STRING" id="456481.LEPBI_I2366"/>
<dbReference type="KEGG" id="lbi:LEPBI_I2366"/>
<dbReference type="HOGENOM" id="CLU_034866_0_2_12"/>
<dbReference type="OrthoDB" id="9809412at2"/>
<dbReference type="BioCyc" id="LBIF456481:LEPBI_RS11685-MONOMER"/>
<dbReference type="UniPathway" id="UPA00135">
    <property type="reaction ID" value="UER00197"/>
</dbReference>
<dbReference type="UniPathway" id="UPA00244">
    <property type="reaction ID" value="UER00311"/>
</dbReference>
<dbReference type="Proteomes" id="UP000001847">
    <property type="component" value="Chromosome I"/>
</dbReference>
<dbReference type="GO" id="GO:0005737">
    <property type="term" value="C:cytoplasm"/>
    <property type="evidence" value="ECO:0007669"/>
    <property type="project" value="UniProtKB-SubCell"/>
</dbReference>
<dbReference type="GO" id="GO:0004648">
    <property type="term" value="F:O-phospho-L-serine:2-oxoglutarate aminotransferase activity"/>
    <property type="evidence" value="ECO:0007669"/>
    <property type="project" value="UniProtKB-UniRule"/>
</dbReference>
<dbReference type="GO" id="GO:0030170">
    <property type="term" value="F:pyridoxal phosphate binding"/>
    <property type="evidence" value="ECO:0007669"/>
    <property type="project" value="UniProtKB-UniRule"/>
</dbReference>
<dbReference type="GO" id="GO:0006564">
    <property type="term" value="P:L-serine biosynthetic process"/>
    <property type="evidence" value="ECO:0007669"/>
    <property type="project" value="UniProtKB-UniRule"/>
</dbReference>
<dbReference type="GO" id="GO:0008615">
    <property type="term" value="P:pyridoxine biosynthetic process"/>
    <property type="evidence" value="ECO:0007669"/>
    <property type="project" value="UniProtKB-UniRule"/>
</dbReference>
<dbReference type="FunFam" id="3.40.640.10:FF:000010">
    <property type="entry name" value="Phosphoserine aminotransferase"/>
    <property type="match status" value="1"/>
</dbReference>
<dbReference type="FunFam" id="3.90.1150.10:FF:000006">
    <property type="entry name" value="Phosphoserine aminotransferase"/>
    <property type="match status" value="1"/>
</dbReference>
<dbReference type="Gene3D" id="3.90.1150.10">
    <property type="entry name" value="Aspartate Aminotransferase, domain 1"/>
    <property type="match status" value="1"/>
</dbReference>
<dbReference type="Gene3D" id="3.40.640.10">
    <property type="entry name" value="Type I PLP-dependent aspartate aminotransferase-like (Major domain)"/>
    <property type="match status" value="1"/>
</dbReference>
<dbReference type="HAMAP" id="MF_00160">
    <property type="entry name" value="SerC_aminotrans_5"/>
    <property type="match status" value="1"/>
</dbReference>
<dbReference type="InterPro" id="IPR000192">
    <property type="entry name" value="Aminotrans_V_dom"/>
</dbReference>
<dbReference type="InterPro" id="IPR022278">
    <property type="entry name" value="Pser_aminoTfrase"/>
</dbReference>
<dbReference type="InterPro" id="IPR015424">
    <property type="entry name" value="PyrdxlP-dep_Trfase"/>
</dbReference>
<dbReference type="InterPro" id="IPR015421">
    <property type="entry name" value="PyrdxlP-dep_Trfase_major"/>
</dbReference>
<dbReference type="InterPro" id="IPR015422">
    <property type="entry name" value="PyrdxlP-dep_Trfase_small"/>
</dbReference>
<dbReference type="NCBIfam" id="NF003764">
    <property type="entry name" value="PRK05355.1"/>
    <property type="match status" value="1"/>
</dbReference>
<dbReference type="NCBIfam" id="TIGR01364">
    <property type="entry name" value="serC_1"/>
    <property type="match status" value="1"/>
</dbReference>
<dbReference type="PANTHER" id="PTHR43247">
    <property type="entry name" value="PHOSPHOSERINE AMINOTRANSFERASE"/>
    <property type="match status" value="1"/>
</dbReference>
<dbReference type="PANTHER" id="PTHR43247:SF1">
    <property type="entry name" value="PHOSPHOSERINE AMINOTRANSFERASE"/>
    <property type="match status" value="1"/>
</dbReference>
<dbReference type="Pfam" id="PF00266">
    <property type="entry name" value="Aminotran_5"/>
    <property type="match status" value="1"/>
</dbReference>
<dbReference type="PIRSF" id="PIRSF000525">
    <property type="entry name" value="SerC"/>
    <property type="match status" value="1"/>
</dbReference>
<dbReference type="SUPFAM" id="SSF53383">
    <property type="entry name" value="PLP-dependent transferases"/>
    <property type="match status" value="1"/>
</dbReference>
<proteinExistence type="inferred from homology"/>
<sequence length="365" mass="40912">MPTFTHRIYNFNAGPAMLPTEVMEEAKSEFLNFRGTGMSVMEMSHREKHFQSILDESISDLRELLNLPSRYAVVYFPGGATLQFSAIPFNYLSSGDSCDFALTGVWAKKAFEEAKKFYPNVKSIFNGADSKYMELPTITDESVNDGAKYMYITSNNTIYGTRYKTFPKLKKAPLIADMTSELLSRKLPIEDFSVIFAGAQKNIGPSGLTLVIYDKEKLPEVSHPIPNLMNFALMEKNGSLYNTPPTYSIYIAGLVFKYLKRKGGLAVMEETNERKAKKLYDAIDSSSLFYAPVPVPFRSAMNVVFRSHNDGLDSKFLSLAEEQGFAGLKGYREVGGFRASIYNAMPEEGVDALISFMKEFERSNG</sequence>
<reference key="1">
    <citation type="journal article" date="2008" name="PLoS ONE">
        <title>Genome sequence of the saprophyte Leptospira biflexa provides insights into the evolution of Leptospira and the pathogenesis of leptospirosis.</title>
        <authorList>
            <person name="Picardeau M."/>
            <person name="Bulach D.M."/>
            <person name="Bouchier C."/>
            <person name="Zuerner R.L."/>
            <person name="Zidane N."/>
            <person name="Wilson P.J."/>
            <person name="Creno S."/>
            <person name="Kuczek E.S."/>
            <person name="Bommezzadri S."/>
            <person name="Davis J.C."/>
            <person name="McGrath A."/>
            <person name="Johnson M.J."/>
            <person name="Boursaux-Eude C."/>
            <person name="Seemann T."/>
            <person name="Rouy Z."/>
            <person name="Coppel R.L."/>
            <person name="Rood J.I."/>
            <person name="Lajus A."/>
            <person name="Davies J.K."/>
            <person name="Medigue C."/>
            <person name="Adler B."/>
        </authorList>
    </citation>
    <scope>NUCLEOTIDE SEQUENCE [LARGE SCALE GENOMIC DNA]</scope>
    <source>
        <strain>Patoc 1 / ATCC 23582 / Paris</strain>
    </source>
</reference>